<name>RHC2A_ARATH</name>
<comment type="function">
    <text evidence="1">Probable E3 ubiquitin-protein ligase that may possess E3 ubiquitin ligase activity in vitro.</text>
</comment>
<comment type="catalytic activity">
    <reaction>
        <text>S-ubiquitinyl-[E2 ubiquitin-conjugating enzyme]-L-cysteine + [acceptor protein]-L-lysine = [E2 ubiquitin-conjugating enzyme]-L-cysteine + N(6)-ubiquitinyl-[acceptor protein]-L-lysine.</text>
        <dbReference type="EC" id="2.3.2.27"/>
    </reaction>
</comment>
<comment type="pathway">
    <text evidence="5">Protein modification; protein ubiquitination.</text>
</comment>
<sequence length="401" mass="43109">MASGSYWCYSCSRFVWVSDSISCPDCDGGFLELIQEPLDFTPSDSFTTTTTTQHRSPTRFPPPSSSSSTPSASMHADNSPTPTIVTRTRSNRSPNPVIVLRGSAAAPSSDVVSEGLDRSAFQMYYDDGTDSGLRPLPPSMTEFLLGSGFDRLLDQISQIELNTNRNLRSCEHPPASKSAIEALPLIEIDPTHLLSDSQSHCAVCKENFVLKSSAREMPCNHIYHPDCILPWLAIRNSCPVCRHELPAEDLTDGTGAALTAVTATAEEEEDSAAGLTIWRLPGGGFAVGRIPGGWRGGDRMMPVVYTEVDGGRLGDERLPRRVAWGSRRGGRDGGGSRERGGGFAGRIMRLFGCFSGSSGSIAAAAAASSGSGSRIRVTRRTRSFSMFSTASSSSRRRNWLA</sequence>
<organism>
    <name type="scientific">Arabidopsis thaliana</name>
    <name type="common">Mouse-ear cress</name>
    <dbReference type="NCBI Taxonomy" id="3702"/>
    <lineage>
        <taxon>Eukaryota</taxon>
        <taxon>Viridiplantae</taxon>
        <taxon>Streptophyta</taxon>
        <taxon>Embryophyta</taxon>
        <taxon>Tracheophyta</taxon>
        <taxon>Spermatophyta</taxon>
        <taxon>Magnoliopsida</taxon>
        <taxon>eudicotyledons</taxon>
        <taxon>Gunneridae</taxon>
        <taxon>Pentapetalae</taxon>
        <taxon>rosids</taxon>
        <taxon>malvids</taxon>
        <taxon>Brassicales</taxon>
        <taxon>Brassicaceae</taxon>
        <taxon>Camelineae</taxon>
        <taxon>Arabidopsis</taxon>
    </lineage>
</organism>
<feature type="chain" id="PRO_0000436416" description="Probable E3 ubiquitin-protein ligase RHC2A">
    <location>
        <begin position="1"/>
        <end position="401"/>
    </location>
</feature>
<feature type="zinc finger region" description="RING-type; atypical" evidence="2">
    <location>
        <begin position="201"/>
        <end position="242"/>
    </location>
</feature>
<feature type="region of interest" description="Disordered" evidence="3">
    <location>
        <begin position="41"/>
        <end position="93"/>
    </location>
</feature>
<feature type="compositionally biased region" description="Polar residues" evidence="3">
    <location>
        <begin position="76"/>
        <end position="93"/>
    </location>
</feature>
<accession>O22283</accession>
<protein>
    <recommendedName>
        <fullName evidence="5">Probable E3 ubiquitin-protein ligase RHC2A</fullName>
        <ecNumber>2.3.2.27</ecNumber>
    </recommendedName>
    <alternativeName>
        <fullName evidence="4">RING-H2 finger C2a</fullName>
    </alternativeName>
    <alternativeName>
        <fullName evidence="5">RING-H2 zinc finger protein RHC2a</fullName>
    </alternativeName>
    <alternativeName>
        <fullName evidence="5">RING-type E3 ubiquitin transferase RHC2A</fullName>
    </alternativeName>
</protein>
<proteinExistence type="evidence at transcript level"/>
<reference key="1">
    <citation type="journal article" date="1998" name="FEBS Lett.">
        <title>Widespread occurrence of a highly conserved RING-H2 zinc finger motif in the model plant Arabidopsis thaliana.</title>
        <authorList>
            <person name="Jensen R.B."/>
            <person name="Jensen K.L."/>
            <person name="Jespersen H.M."/>
            <person name="Skriver K."/>
        </authorList>
    </citation>
    <scope>NUCLEOTIDE SEQUENCE [MRNA]</scope>
    <source>
        <strain>cv. Columbia</strain>
    </source>
</reference>
<reference key="2">
    <citation type="journal article" date="1999" name="Nature">
        <title>Sequence and analysis of chromosome 2 of the plant Arabidopsis thaliana.</title>
        <authorList>
            <person name="Lin X."/>
            <person name="Kaul S."/>
            <person name="Rounsley S.D."/>
            <person name="Shea T.P."/>
            <person name="Benito M.-I."/>
            <person name="Town C.D."/>
            <person name="Fujii C.Y."/>
            <person name="Mason T.M."/>
            <person name="Bowman C.L."/>
            <person name="Barnstead M.E."/>
            <person name="Feldblyum T.V."/>
            <person name="Buell C.R."/>
            <person name="Ketchum K.A."/>
            <person name="Lee J.J."/>
            <person name="Ronning C.M."/>
            <person name="Koo H.L."/>
            <person name="Moffat K.S."/>
            <person name="Cronin L.A."/>
            <person name="Shen M."/>
            <person name="Pai G."/>
            <person name="Van Aken S."/>
            <person name="Umayam L."/>
            <person name="Tallon L.J."/>
            <person name="Gill J.E."/>
            <person name="Adams M.D."/>
            <person name="Carrera A.J."/>
            <person name="Creasy T.H."/>
            <person name="Goodman H.M."/>
            <person name="Somerville C.R."/>
            <person name="Copenhaver G.P."/>
            <person name="Preuss D."/>
            <person name="Nierman W.C."/>
            <person name="White O."/>
            <person name="Eisen J.A."/>
            <person name="Salzberg S.L."/>
            <person name="Fraser C.M."/>
            <person name="Venter J.C."/>
        </authorList>
    </citation>
    <scope>NUCLEOTIDE SEQUENCE [LARGE SCALE GENOMIC DNA]</scope>
    <source>
        <strain>cv. Columbia</strain>
    </source>
</reference>
<reference key="3">
    <citation type="journal article" date="2017" name="Plant J.">
        <title>Araport11: a complete reannotation of the Arabidopsis thaliana reference genome.</title>
        <authorList>
            <person name="Cheng C.Y."/>
            <person name="Krishnakumar V."/>
            <person name="Chan A.P."/>
            <person name="Thibaud-Nissen F."/>
            <person name="Schobel S."/>
            <person name="Town C.D."/>
        </authorList>
    </citation>
    <scope>GENOME REANNOTATION</scope>
    <source>
        <strain>cv. Columbia</strain>
    </source>
</reference>
<reference key="4">
    <citation type="journal article" date="2003" name="Science">
        <title>Empirical analysis of transcriptional activity in the Arabidopsis genome.</title>
        <authorList>
            <person name="Yamada K."/>
            <person name="Lim J."/>
            <person name="Dale J.M."/>
            <person name="Chen H."/>
            <person name="Shinn P."/>
            <person name="Palm C.J."/>
            <person name="Southwick A.M."/>
            <person name="Wu H.C."/>
            <person name="Kim C.J."/>
            <person name="Nguyen M."/>
            <person name="Pham P.K."/>
            <person name="Cheuk R.F."/>
            <person name="Karlin-Newmann G."/>
            <person name="Liu S.X."/>
            <person name="Lam B."/>
            <person name="Sakano H."/>
            <person name="Wu T."/>
            <person name="Yu G."/>
            <person name="Miranda M."/>
            <person name="Quach H.L."/>
            <person name="Tripp M."/>
            <person name="Chang C.H."/>
            <person name="Lee J.M."/>
            <person name="Toriumi M.J."/>
            <person name="Chan M.M."/>
            <person name="Tang C.C."/>
            <person name="Onodera C.S."/>
            <person name="Deng J.M."/>
            <person name="Akiyama K."/>
            <person name="Ansari Y."/>
            <person name="Arakawa T."/>
            <person name="Banh J."/>
            <person name="Banno F."/>
            <person name="Bowser L."/>
            <person name="Brooks S.Y."/>
            <person name="Carninci P."/>
            <person name="Chao Q."/>
            <person name="Choy N."/>
            <person name="Enju A."/>
            <person name="Goldsmith A.D."/>
            <person name="Gurjal M."/>
            <person name="Hansen N.F."/>
            <person name="Hayashizaki Y."/>
            <person name="Johnson-Hopson C."/>
            <person name="Hsuan V.W."/>
            <person name="Iida K."/>
            <person name="Karnes M."/>
            <person name="Khan S."/>
            <person name="Koesema E."/>
            <person name="Ishida J."/>
            <person name="Jiang P.X."/>
            <person name="Jones T."/>
            <person name="Kawai J."/>
            <person name="Kamiya A."/>
            <person name="Meyers C."/>
            <person name="Nakajima M."/>
            <person name="Narusaka M."/>
            <person name="Seki M."/>
            <person name="Sakurai T."/>
            <person name="Satou M."/>
            <person name="Tamse R."/>
            <person name="Vaysberg M."/>
            <person name="Wallender E.K."/>
            <person name="Wong C."/>
            <person name="Yamamura Y."/>
            <person name="Yuan S."/>
            <person name="Shinozaki K."/>
            <person name="Davis R.W."/>
            <person name="Theologis A."/>
            <person name="Ecker J.R."/>
        </authorList>
    </citation>
    <scope>NUCLEOTIDE SEQUENCE [LARGE SCALE MRNA]</scope>
    <source>
        <strain>cv. Columbia</strain>
    </source>
</reference>
<reference key="5">
    <citation type="submission" date="2002-03" db="EMBL/GenBank/DDBJ databases">
        <title>Full-length cDNA from Arabidopsis thaliana.</title>
        <authorList>
            <person name="Brover V.V."/>
            <person name="Troukhan M.E."/>
            <person name="Alexandrov N.A."/>
            <person name="Lu Y.-P."/>
            <person name="Flavell R.B."/>
            <person name="Feldmann K.A."/>
        </authorList>
    </citation>
    <scope>NUCLEOTIDE SEQUENCE [LARGE SCALE MRNA]</scope>
</reference>
<evidence type="ECO:0000250" key="1">
    <source>
        <dbReference type="UniProtKB" id="Q9ZT50"/>
    </source>
</evidence>
<evidence type="ECO:0000255" key="2">
    <source>
        <dbReference type="PROSITE-ProRule" id="PRU00175"/>
    </source>
</evidence>
<evidence type="ECO:0000256" key="3">
    <source>
        <dbReference type="SAM" id="MobiDB-lite"/>
    </source>
</evidence>
<evidence type="ECO:0000303" key="4">
    <source>
    </source>
</evidence>
<evidence type="ECO:0000305" key="5"/>
<evidence type="ECO:0000312" key="6">
    <source>
        <dbReference type="Araport" id="AT2G39720"/>
    </source>
</evidence>
<dbReference type="EC" id="2.3.2.27"/>
<dbReference type="EMBL" id="AF079186">
    <property type="protein sequence ID" value="AAC69860.1"/>
    <property type="molecule type" value="mRNA"/>
</dbReference>
<dbReference type="EMBL" id="AC003000">
    <property type="protein sequence ID" value="AAB87121.1"/>
    <property type="molecule type" value="Genomic_DNA"/>
</dbReference>
<dbReference type="EMBL" id="CP002685">
    <property type="protein sequence ID" value="AEC09711.1"/>
    <property type="molecule type" value="Genomic_DNA"/>
</dbReference>
<dbReference type="EMBL" id="CP002685">
    <property type="protein sequence ID" value="ANM62301.1"/>
    <property type="molecule type" value="Genomic_DNA"/>
</dbReference>
<dbReference type="EMBL" id="AY074579">
    <property type="protein sequence ID" value="AAL67118.1"/>
    <property type="molecule type" value="mRNA"/>
</dbReference>
<dbReference type="EMBL" id="AY094016">
    <property type="protein sequence ID" value="AAM16172.1"/>
    <property type="molecule type" value="mRNA"/>
</dbReference>
<dbReference type="EMBL" id="AY086492">
    <property type="protein sequence ID" value="AAM67317.1"/>
    <property type="molecule type" value="mRNA"/>
</dbReference>
<dbReference type="PIR" id="T01001">
    <property type="entry name" value="T01001"/>
</dbReference>
<dbReference type="RefSeq" id="NP_001318385.1">
    <property type="nucleotide sequence ID" value="NM_001336792.1"/>
</dbReference>
<dbReference type="RefSeq" id="NP_030517.1">
    <property type="nucleotide sequence ID" value="NM_129529.4"/>
</dbReference>
<dbReference type="SMR" id="O22283"/>
<dbReference type="FunCoup" id="O22283">
    <property type="interactions" value="54"/>
</dbReference>
<dbReference type="STRING" id="3702.O22283"/>
<dbReference type="GlyGen" id="O22283">
    <property type="glycosylation" value="1 site"/>
</dbReference>
<dbReference type="PaxDb" id="3702-AT2G39720.1"/>
<dbReference type="ProteomicsDB" id="236904"/>
<dbReference type="EnsemblPlants" id="AT2G39720.1">
    <property type="protein sequence ID" value="AT2G39720.1"/>
    <property type="gene ID" value="AT2G39720"/>
</dbReference>
<dbReference type="EnsemblPlants" id="AT2G39720.2">
    <property type="protein sequence ID" value="AT2G39720.2"/>
    <property type="gene ID" value="AT2G39720"/>
</dbReference>
<dbReference type="GeneID" id="818556"/>
<dbReference type="Gramene" id="AT2G39720.1">
    <property type="protein sequence ID" value="AT2G39720.1"/>
    <property type="gene ID" value="AT2G39720"/>
</dbReference>
<dbReference type="Gramene" id="AT2G39720.2">
    <property type="protein sequence ID" value="AT2G39720.2"/>
    <property type="gene ID" value="AT2G39720"/>
</dbReference>
<dbReference type="KEGG" id="ath:AT2G39720"/>
<dbReference type="Araport" id="AT2G39720"/>
<dbReference type="TAIR" id="AT2G39720">
    <property type="gene designation" value="RHC2A"/>
</dbReference>
<dbReference type="eggNOG" id="KOG0800">
    <property type="taxonomic scope" value="Eukaryota"/>
</dbReference>
<dbReference type="HOGENOM" id="CLU_040377_0_0_1"/>
<dbReference type="InParanoid" id="O22283"/>
<dbReference type="OMA" id="TRSFSMF"/>
<dbReference type="PhylomeDB" id="O22283"/>
<dbReference type="UniPathway" id="UPA00143"/>
<dbReference type="PRO" id="PR:O22283"/>
<dbReference type="Proteomes" id="UP000006548">
    <property type="component" value="Chromosome 2"/>
</dbReference>
<dbReference type="ExpressionAtlas" id="O22283">
    <property type="expression patterns" value="baseline and differential"/>
</dbReference>
<dbReference type="GO" id="GO:0061630">
    <property type="term" value="F:ubiquitin protein ligase activity"/>
    <property type="evidence" value="ECO:0007669"/>
    <property type="project" value="InterPro"/>
</dbReference>
<dbReference type="GO" id="GO:0008270">
    <property type="term" value="F:zinc ion binding"/>
    <property type="evidence" value="ECO:0007669"/>
    <property type="project" value="UniProtKB-KW"/>
</dbReference>
<dbReference type="GO" id="GO:0016567">
    <property type="term" value="P:protein ubiquitination"/>
    <property type="evidence" value="ECO:0007669"/>
    <property type="project" value="UniProtKB-UniPathway"/>
</dbReference>
<dbReference type="FunFam" id="3.30.40.10:FF:000022">
    <property type="entry name" value="E3 ubiquitin-protein ligase RING1-like"/>
    <property type="match status" value="1"/>
</dbReference>
<dbReference type="Gene3D" id="3.30.40.10">
    <property type="entry name" value="Zinc/RING finger domain, C3HC4 (zinc finger)"/>
    <property type="match status" value="1"/>
</dbReference>
<dbReference type="InterPro" id="IPR010543">
    <property type="entry name" value="DUF1117"/>
</dbReference>
<dbReference type="InterPro" id="IPR039525">
    <property type="entry name" value="RNF126-like_zinc-ribbon"/>
</dbReference>
<dbReference type="InterPro" id="IPR001841">
    <property type="entry name" value="Znf_RING"/>
</dbReference>
<dbReference type="InterPro" id="IPR013083">
    <property type="entry name" value="Znf_RING/FYVE/PHD"/>
</dbReference>
<dbReference type="PANTHER" id="PTHR15710">
    <property type="entry name" value="E3 UBIQUITIN-PROTEIN LIGASE PRAJA"/>
    <property type="match status" value="1"/>
</dbReference>
<dbReference type="PANTHER" id="PTHR15710:SF93">
    <property type="entry name" value="E3 UBIQUITIN-PROTEIN LIGASE RHC2A-RELATED"/>
    <property type="match status" value="1"/>
</dbReference>
<dbReference type="Pfam" id="PF06547">
    <property type="entry name" value="DUF1117"/>
    <property type="match status" value="1"/>
</dbReference>
<dbReference type="Pfam" id="PF13639">
    <property type="entry name" value="zf-RING_2"/>
    <property type="match status" value="1"/>
</dbReference>
<dbReference type="Pfam" id="PF14369">
    <property type="entry name" value="Zn_ribbon_19"/>
    <property type="match status" value="1"/>
</dbReference>
<dbReference type="SMART" id="SM00184">
    <property type="entry name" value="RING"/>
    <property type="match status" value="1"/>
</dbReference>
<dbReference type="SUPFAM" id="SSF57850">
    <property type="entry name" value="RING/U-box"/>
    <property type="match status" value="1"/>
</dbReference>
<dbReference type="PROSITE" id="PS50089">
    <property type="entry name" value="ZF_RING_2"/>
    <property type="match status" value="1"/>
</dbReference>
<gene>
    <name evidence="4" type="primary">RHC2A</name>
    <name evidence="6" type="ordered locus">At2g39720</name>
</gene>
<keyword id="KW-0479">Metal-binding</keyword>
<keyword id="KW-1185">Reference proteome</keyword>
<keyword id="KW-0808">Transferase</keyword>
<keyword id="KW-0833">Ubl conjugation pathway</keyword>
<keyword id="KW-0862">Zinc</keyword>
<keyword id="KW-0863">Zinc-finger</keyword>